<proteinExistence type="inferred from homology"/>
<protein>
    <recommendedName>
        <fullName evidence="1">Phosphoheptose isomerase</fullName>
        <ecNumber evidence="1">5.3.1.28</ecNumber>
    </recommendedName>
    <alternativeName>
        <fullName evidence="1">Sedoheptulose 7-phosphate isomerase</fullName>
    </alternativeName>
</protein>
<organism>
    <name type="scientific">Haemophilus influenzae (strain ATCC 51907 / DSM 11121 / KW20 / Rd)</name>
    <dbReference type="NCBI Taxonomy" id="71421"/>
    <lineage>
        <taxon>Bacteria</taxon>
        <taxon>Pseudomonadati</taxon>
        <taxon>Pseudomonadota</taxon>
        <taxon>Gammaproteobacteria</taxon>
        <taxon>Pasteurellales</taxon>
        <taxon>Pasteurellaceae</taxon>
        <taxon>Haemophilus</taxon>
    </lineage>
</organism>
<comment type="function">
    <text evidence="3">Catalyzes the isomerization of sedoheptulose 7-phosphate in D-glycero-D-manno-heptose 7-phosphate.</text>
</comment>
<comment type="catalytic activity">
    <reaction evidence="1">
        <text>2 D-sedoheptulose 7-phosphate = D-glycero-alpha-D-manno-heptose 7-phosphate + D-glycero-beta-D-manno-heptose 7-phosphate</text>
        <dbReference type="Rhea" id="RHEA:27489"/>
        <dbReference type="ChEBI" id="CHEBI:57483"/>
        <dbReference type="ChEBI" id="CHEBI:60203"/>
        <dbReference type="ChEBI" id="CHEBI:60204"/>
        <dbReference type="EC" id="5.3.1.28"/>
    </reaction>
</comment>
<comment type="cofactor">
    <cofactor evidence="1">
        <name>Zn(2+)</name>
        <dbReference type="ChEBI" id="CHEBI:29105"/>
    </cofactor>
    <text evidence="1">Binds 1 zinc ion per subunit.</text>
</comment>
<comment type="pathway">
    <text evidence="1">Carbohydrate biosynthesis; D-glycero-D-manno-heptose 7-phosphate biosynthesis; D-glycero-alpha-D-manno-heptose 7-phosphate and D-glycero-beta-D-manno-heptose 7-phosphate from sedoheptulose 7-phosphate: step 1/1.</text>
</comment>
<comment type="pathway">
    <text>Bacterial outer membrane biogenesis; LOS core biosynthesis.</text>
</comment>
<comment type="subunit">
    <text evidence="1">Homotetramer.</text>
</comment>
<comment type="subcellular location">
    <subcellularLocation>
        <location evidence="1">Cytoplasm</location>
    </subcellularLocation>
</comment>
<comment type="miscellaneous">
    <text evidence="1">The reaction produces a racemic mixture of D-glycero-alpha-D-manno-heptose 7-phosphate and D-glycero-beta-D-manno-heptose 7-phosphate.</text>
</comment>
<comment type="similarity">
    <text evidence="1">Belongs to the SIS family. GmhA subfamily.</text>
</comment>
<name>GMHA_HAEIN</name>
<feature type="chain" id="PRO_0000136531" description="Phosphoheptose isomerase">
    <location>
        <begin position="1"/>
        <end position="194"/>
    </location>
</feature>
<feature type="domain" description="SIS" evidence="1">
    <location>
        <begin position="37"/>
        <end position="194"/>
    </location>
</feature>
<feature type="binding site" evidence="1">
    <location>
        <begin position="52"/>
        <end position="54"/>
    </location>
    <ligand>
        <name>substrate</name>
    </ligand>
</feature>
<feature type="binding site" evidence="1">
    <location>
        <position position="61"/>
    </location>
    <ligand>
        <name>Zn(2+)</name>
        <dbReference type="ChEBI" id="CHEBI:29105"/>
    </ligand>
</feature>
<feature type="binding site" evidence="1">
    <location>
        <position position="65"/>
    </location>
    <ligand>
        <name>substrate</name>
    </ligand>
</feature>
<feature type="binding site" evidence="1">
    <location>
        <position position="65"/>
    </location>
    <ligand>
        <name>Zn(2+)</name>
        <dbReference type="ChEBI" id="CHEBI:29105"/>
    </ligand>
</feature>
<feature type="binding site" evidence="1">
    <location>
        <begin position="93"/>
        <end position="94"/>
    </location>
    <ligand>
        <name>substrate</name>
    </ligand>
</feature>
<feature type="binding site" evidence="1">
    <location>
        <begin position="119"/>
        <end position="121"/>
    </location>
    <ligand>
        <name>substrate</name>
    </ligand>
</feature>
<feature type="binding site" evidence="1">
    <location>
        <position position="124"/>
    </location>
    <ligand>
        <name>substrate</name>
    </ligand>
</feature>
<feature type="binding site" evidence="1">
    <location>
        <position position="172"/>
    </location>
    <ligand>
        <name>substrate</name>
    </ligand>
</feature>
<feature type="binding site" evidence="1">
    <location>
        <position position="172"/>
    </location>
    <ligand>
        <name>Zn(2+)</name>
        <dbReference type="ChEBI" id="CHEBI:29105"/>
    </ligand>
</feature>
<feature type="binding site" evidence="1">
    <location>
        <position position="180"/>
    </location>
    <ligand>
        <name>Zn(2+)</name>
        <dbReference type="ChEBI" id="CHEBI:29105"/>
    </ligand>
</feature>
<feature type="sequence conflict" description="In Ref. 1; AAA95976." evidence="2" ref="1">
    <original>E</original>
    <variation>D</variation>
    <location>
        <position position="106"/>
    </location>
</feature>
<dbReference type="EC" id="5.3.1.28" evidence="1"/>
<dbReference type="EMBL" id="U17295">
    <property type="protein sequence ID" value="AAA95976.1"/>
    <property type="molecule type" value="Genomic_DNA"/>
</dbReference>
<dbReference type="EMBL" id="L42023">
    <property type="protein sequence ID" value="AAC22832.1"/>
    <property type="molecule type" value="Genomic_DNA"/>
</dbReference>
<dbReference type="PIR" id="G64168">
    <property type="entry name" value="G64168"/>
</dbReference>
<dbReference type="RefSeq" id="NP_439337.1">
    <property type="nucleotide sequence ID" value="NC_000907.1"/>
</dbReference>
<dbReference type="SMR" id="P45093"/>
<dbReference type="STRING" id="71421.HI_1181"/>
<dbReference type="EnsemblBacteria" id="AAC22832">
    <property type="protein sequence ID" value="AAC22832"/>
    <property type="gene ID" value="HI_1181"/>
</dbReference>
<dbReference type="KEGG" id="hin:HI_1181"/>
<dbReference type="PATRIC" id="fig|71421.8.peg.1232"/>
<dbReference type="eggNOG" id="COG0279">
    <property type="taxonomic scope" value="Bacteria"/>
</dbReference>
<dbReference type="HOGENOM" id="CLU_080999_4_0_6"/>
<dbReference type="OrthoDB" id="9810929at2"/>
<dbReference type="PhylomeDB" id="P45093"/>
<dbReference type="BioCyc" id="HINF71421:G1GJ1-1213-MONOMER"/>
<dbReference type="BRENDA" id="5.3.1.28">
    <property type="organism ID" value="2529"/>
</dbReference>
<dbReference type="UniPathway" id="UPA00041">
    <property type="reaction ID" value="UER00436"/>
</dbReference>
<dbReference type="UniPathway" id="UPA00976"/>
<dbReference type="Proteomes" id="UP000000579">
    <property type="component" value="Chromosome"/>
</dbReference>
<dbReference type="GO" id="GO:0005829">
    <property type="term" value="C:cytosol"/>
    <property type="evidence" value="ECO:0000318"/>
    <property type="project" value="GO_Central"/>
</dbReference>
<dbReference type="GO" id="GO:0097367">
    <property type="term" value="F:carbohydrate derivative binding"/>
    <property type="evidence" value="ECO:0007669"/>
    <property type="project" value="InterPro"/>
</dbReference>
<dbReference type="GO" id="GO:0008968">
    <property type="term" value="F:D-sedoheptulose 7-phosphate isomerase activity"/>
    <property type="evidence" value="ECO:0000318"/>
    <property type="project" value="GO_Central"/>
</dbReference>
<dbReference type="GO" id="GO:0008270">
    <property type="term" value="F:zinc ion binding"/>
    <property type="evidence" value="ECO:0007669"/>
    <property type="project" value="UniProtKB-UniRule"/>
</dbReference>
<dbReference type="GO" id="GO:0005975">
    <property type="term" value="P:carbohydrate metabolic process"/>
    <property type="evidence" value="ECO:0007669"/>
    <property type="project" value="UniProtKB-UniRule"/>
</dbReference>
<dbReference type="GO" id="GO:2001061">
    <property type="term" value="P:D-glycero-D-manno-heptose 7-phosphate biosynthetic process"/>
    <property type="evidence" value="ECO:0000318"/>
    <property type="project" value="GO_Central"/>
</dbReference>
<dbReference type="CDD" id="cd05006">
    <property type="entry name" value="SIS_GmhA"/>
    <property type="match status" value="1"/>
</dbReference>
<dbReference type="Gene3D" id="3.40.50.10490">
    <property type="entry name" value="Glucose-6-phosphate isomerase like protein, domain 1"/>
    <property type="match status" value="1"/>
</dbReference>
<dbReference type="HAMAP" id="MF_00067">
    <property type="entry name" value="GmhA"/>
    <property type="match status" value="1"/>
</dbReference>
<dbReference type="InterPro" id="IPR035461">
    <property type="entry name" value="GmhA/DiaA"/>
</dbReference>
<dbReference type="InterPro" id="IPR004515">
    <property type="entry name" value="Phosphoheptose_Isoase"/>
</dbReference>
<dbReference type="InterPro" id="IPR001347">
    <property type="entry name" value="SIS_dom"/>
</dbReference>
<dbReference type="InterPro" id="IPR046348">
    <property type="entry name" value="SIS_dom_sf"/>
</dbReference>
<dbReference type="InterPro" id="IPR050099">
    <property type="entry name" value="SIS_GmhA/DiaA_subfam"/>
</dbReference>
<dbReference type="NCBIfam" id="TIGR00441">
    <property type="entry name" value="gmhA"/>
    <property type="match status" value="1"/>
</dbReference>
<dbReference type="NCBIfam" id="NF001628">
    <property type="entry name" value="PRK00414.1"/>
    <property type="match status" value="1"/>
</dbReference>
<dbReference type="PANTHER" id="PTHR30390:SF7">
    <property type="entry name" value="PHOSPHOHEPTOSE ISOMERASE"/>
    <property type="match status" value="1"/>
</dbReference>
<dbReference type="PANTHER" id="PTHR30390">
    <property type="entry name" value="SEDOHEPTULOSE 7-PHOSPHATE ISOMERASE / DNAA INITIATOR-ASSOCIATING FACTOR FOR REPLICATION INITIATION"/>
    <property type="match status" value="1"/>
</dbReference>
<dbReference type="Pfam" id="PF13580">
    <property type="entry name" value="SIS_2"/>
    <property type="match status" value="1"/>
</dbReference>
<dbReference type="SUPFAM" id="SSF53697">
    <property type="entry name" value="SIS domain"/>
    <property type="match status" value="1"/>
</dbReference>
<dbReference type="PROSITE" id="PS51464">
    <property type="entry name" value="SIS"/>
    <property type="match status" value="1"/>
</dbReference>
<sequence length="194" mass="21379">MYLDQIKSELVEAQDVLNKFISDENNIKLIQEAALLISNSFKQGGKVLSCGNGGSHCDAMHFAEELTGRYRENRPGYPAIAISDASHLSCVSNDFGYEYVFSRYVEAVGQKGDVLFGLSTSGNSKNILNAIEAAKTKGMKVIAMTGKDGGKMAGLADVEIRVPHFRYADRIQEIHIKVIHILMMLIEFEMAKQA</sequence>
<gene>
    <name evidence="1" type="primary">gmhA</name>
    <name type="synonym">isn</name>
    <name type="synonym">lpcA</name>
    <name type="ordered locus">HI_1181</name>
</gene>
<reference key="1">
    <citation type="journal article" date="1996" name="J. Bacteriol.">
        <title>Altered lipopolysaccharide characteristic of the I69 phenotype in Haemophilus influenzae results from mutations in a novel gene, isn.</title>
        <authorList>
            <person name="Preston A."/>
            <person name="Maskell D."/>
            <person name="Johnson A."/>
            <person name="Moxon E.R."/>
        </authorList>
    </citation>
    <scope>NUCLEOTIDE SEQUENCE [GENOMIC DNA]</scope>
    <source>
        <strain>ATCC 51907 / DSM 11121 / KW20 / Rd</strain>
    </source>
</reference>
<reference key="2">
    <citation type="journal article" date="1995" name="Science">
        <title>Whole-genome random sequencing and assembly of Haemophilus influenzae Rd.</title>
        <authorList>
            <person name="Fleischmann R.D."/>
            <person name="Adams M.D."/>
            <person name="White O."/>
            <person name="Clayton R.A."/>
            <person name="Kirkness E.F."/>
            <person name="Kerlavage A.R."/>
            <person name="Bult C.J."/>
            <person name="Tomb J.-F."/>
            <person name="Dougherty B.A."/>
            <person name="Merrick J.M."/>
            <person name="McKenney K."/>
            <person name="Sutton G.G."/>
            <person name="FitzHugh W."/>
            <person name="Fields C.A."/>
            <person name="Gocayne J.D."/>
            <person name="Scott J.D."/>
            <person name="Shirley R."/>
            <person name="Liu L.-I."/>
            <person name="Glodek A."/>
            <person name="Kelley J.M."/>
            <person name="Weidman J.F."/>
            <person name="Phillips C.A."/>
            <person name="Spriggs T."/>
            <person name="Hedblom E."/>
            <person name="Cotton M.D."/>
            <person name="Utterback T.R."/>
            <person name="Hanna M.C."/>
            <person name="Nguyen D.T."/>
            <person name="Saudek D.M."/>
            <person name="Brandon R.C."/>
            <person name="Fine L.D."/>
            <person name="Fritchman J.L."/>
            <person name="Fuhrmann J.L."/>
            <person name="Geoghagen N.S.M."/>
            <person name="Gnehm C.L."/>
            <person name="McDonald L.A."/>
            <person name="Small K.V."/>
            <person name="Fraser C.M."/>
            <person name="Smith H.O."/>
            <person name="Venter J.C."/>
        </authorList>
    </citation>
    <scope>NUCLEOTIDE SEQUENCE [LARGE SCALE GENOMIC DNA]</scope>
    <source>
        <strain>ATCC 51907 / DSM 11121 / KW20 / Rd</strain>
    </source>
</reference>
<reference key="3">
    <citation type="journal article" date="1996" name="J. Bacteriol.">
        <title>Molecular cloning of the Haemophilus influenzae gmhA (lpcA) gene encoding a phosphoheptose isomerase required for lipooligosaccharide biosynthesis.</title>
        <authorList>
            <person name="Brooke J.S."/>
            <person name="Valvano M.A."/>
        </authorList>
    </citation>
    <scope>ROLE IN LOS BIOSYNTHESIS</scope>
</reference>
<reference key="4">
    <citation type="journal article" date="2002" name="Microbiology">
        <title>Novel pathways for biosynthesis of nucleotide-activated glycero-manno-heptose precursors of bacterial glycoproteins and cell surface polysaccharides.</title>
        <authorList>
            <person name="Valvano M.A."/>
            <person name="Messner P."/>
            <person name="Kosma P."/>
        </authorList>
    </citation>
    <scope>BIOSYNTHESIS OF NUCLEOTIDE-ACTIVATED GLYCERO-MANNO-HEPTOSE</scope>
</reference>
<keyword id="KW-0119">Carbohydrate metabolism</keyword>
<keyword id="KW-0963">Cytoplasm</keyword>
<keyword id="KW-0413">Isomerase</keyword>
<keyword id="KW-0479">Metal-binding</keyword>
<keyword id="KW-1185">Reference proteome</keyword>
<keyword id="KW-0862">Zinc</keyword>
<evidence type="ECO:0000255" key="1">
    <source>
        <dbReference type="HAMAP-Rule" id="MF_00067"/>
    </source>
</evidence>
<evidence type="ECO:0000305" key="2"/>
<evidence type="ECO:0000305" key="3">
    <source>
    </source>
</evidence>
<accession>P45093</accession>